<feature type="chain" id="PRO_0000258562" description="Small ribosomal subunit protein uS10">
    <location>
        <begin position="1"/>
        <end position="102"/>
    </location>
</feature>
<gene>
    <name evidence="1" type="primary">rpsJ</name>
    <name type="ordered locus">Rmet_3323</name>
</gene>
<reference key="1">
    <citation type="journal article" date="2010" name="PLoS ONE">
        <title>The complete genome sequence of Cupriavidus metallidurans strain CH34, a master survivalist in harsh and anthropogenic environments.</title>
        <authorList>
            <person name="Janssen P.J."/>
            <person name="Van Houdt R."/>
            <person name="Moors H."/>
            <person name="Monsieurs P."/>
            <person name="Morin N."/>
            <person name="Michaux A."/>
            <person name="Benotmane M.A."/>
            <person name="Leys N."/>
            <person name="Vallaeys T."/>
            <person name="Lapidus A."/>
            <person name="Monchy S."/>
            <person name="Medigue C."/>
            <person name="Taghavi S."/>
            <person name="McCorkle S."/>
            <person name="Dunn J."/>
            <person name="van der Lelie D."/>
            <person name="Mergeay M."/>
        </authorList>
    </citation>
    <scope>NUCLEOTIDE SEQUENCE [LARGE SCALE GENOMIC DNA]</scope>
    <source>
        <strain>ATCC 43123 / DSM 2839 / NBRC 102507 / CH34</strain>
    </source>
</reference>
<evidence type="ECO:0000255" key="1">
    <source>
        <dbReference type="HAMAP-Rule" id="MF_00508"/>
    </source>
</evidence>
<evidence type="ECO:0000305" key="2"/>
<accession>Q1LI31</accession>
<name>RS10_CUPMC</name>
<sequence>MQNQKIRIRLKAFDYRLIDQSAAEIVDTAKRTGAIVKGPVPLPTRIQRFDILRSPHVNKTSRDQFEIRTHQRLMDIVDPTDKTVDALMKLDLPAGVDVEIKV</sequence>
<protein>
    <recommendedName>
        <fullName evidence="1">Small ribosomal subunit protein uS10</fullName>
    </recommendedName>
    <alternativeName>
        <fullName evidence="2">30S ribosomal protein S10</fullName>
    </alternativeName>
</protein>
<dbReference type="EMBL" id="CP000352">
    <property type="protein sequence ID" value="ABF10195.1"/>
    <property type="molecule type" value="Genomic_DNA"/>
</dbReference>
<dbReference type="RefSeq" id="WP_006160488.1">
    <property type="nucleotide sequence ID" value="NC_007973.1"/>
</dbReference>
<dbReference type="SMR" id="Q1LI31"/>
<dbReference type="STRING" id="266264.Rmet_3323"/>
<dbReference type="GeneID" id="98403017"/>
<dbReference type="KEGG" id="rme:Rmet_3323"/>
<dbReference type="eggNOG" id="COG0051">
    <property type="taxonomic scope" value="Bacteria"/>
</dbReference>
<dbReference type="HOGENOM" id="CLU_122625_1_3_4"/>
<dbReference type="Proteomes" id="UP000002429">
    <property type="component" value="Chromosome"/>
</dbReference>
<dbReference type="GO" id="GO:1990904">
    <property type="term" value="C:ribonucleoprotein complex"/>
    <property type="evidence" value="ECO:0007669"/>
    <property type="project" value="UniProtKB-KW"/>
</dbReference>
<dbReference type="GO" id="GO:0005840">
    <property type="term" value="C:ribosome"/>
    <property type="evidence" value="ECO:0007669"/>
    <property type="project" value="UniProtKB-KW"/>
</dbReference>
<dbReference type="GO" id="GO:0003735">
    <property type="term" value="F:structural constituent of ribosome"/>
    <property type="evidence" value="ECO:0007669"/>
    <property type="project" value="InterPro"/>
</dbReference>
<dbReference type="GO" id="GO:0000049">
    <property type="term" value="F:tRNA binding"/>
    <property type="evidence" value="ECO:0007669"/>
    <property type="project" value="UniProtKB-UniRule"/>
</dbReference>
<dbReference type="GO" id="GO:0006412">
    <property type="term" value="P:translation"/>
    <property type="evidence" value="ECO:0007669"/>
    <property type="project" value="UniProtKB-UniRule"/>
</dbReference>
<dbReference type="FunFam" id="3.30.70.600:FF:000001">
    <property type="entry name" value="30S ribosomal protein S10"/>
    <property type="match status" value="1"/>
</dbReference>
<dbReference type="Gene3D" id="3.30.70.600">
    <property type="entry name" value="Ribosomal protein S10 domain"/>
    <property type="match status" value="1"/>
</dbReference>
<dbReference type="HAMAP" id="MF_00508">
    <property type="entry name" value="Ribosomal_uS10"/>
    <property type="match status" value="1"/>
</dbReference>
<dbReference type="InterPro" id="IPR001848">
    <property type="entry name" value="Ribosomal_uS10"/>
</dbReference>
<dbReference type="InterPro" id="IPR018268">
    <property type="entry name" value="Ribosomal_uS10_CS"/>
</dbReference>
<dbReference type="InterPro" id="IPR027486">
    <property type="entry name" value="Ribosomal_uS10_dom"/>
</dbReference>
<dbReference type="InterPro" id="IPR036838">
    <property type="entry name" value="Ribosomal_uS10_dom_sf"/>
</dbReference>
<dbReference type="NCBIfam" id="NF001861">
    <property type="entry name" value="PRK00596.1"/>
    <property type="match status" value="1"/>
</dbReference>
<dbReference type="NCBIfam" id="TIGR01049">
    <property type="entry name" value="rpsJ_bact"/>
    <property type="match status" value="1"/>
</dbReference>
<dbReference type="PANTHER" id="PTHR11700">
    <property type="entry name" value="30S RIBOSOMAL PROTEIN S10 FAMILY MEMBER"/>
    <property type="match status" value="1"/>
</dbReference>
<dbReference type="Pfam" id="PF00338">
    <property type="entry name" value="Ribosomal_S10"/>
    <property type="match status" value="1"/>
</dbReference>
<dbReference type="PRINTS" id="PR00971">
    <property type="entry name" value="RIBOSOMALS10"/>
</dbReference>
<dbReference type="SMART" id="SM01403">
    <property type="entry name" value="Ribosomal_S10"/>
    <property type="match status" value="1"/>
</dbReference>
<dbReference type="SUPFAM" id="SSF54999">
    <property type="entry name" value="Ribosomal protein S10"/>
    <property type="match status" value="1"/>
</dbReference>
<dbReference type="PROSITE" id="PS00361">
    <property type="entry name" value="RIBOSOMAL_S10"/>
    <property type="match status" value="1"/>
</dbReference>
<organism>
    <name type="scientific">Cupriavidus metallidurans (strain ATCC 43123 / DSM 2839 / NBRC 102507 / CH34)</name>
    <name type="common">Ralstonia metallidurans</name>
    <dbReference type="NCBI Taxonomy" id="266264"/>
    <lineage>
        <taxon>Bacteria</taxon>
        <taxon>Pseudomonadati</taxon>
        <taxon>Pseudomonadota</taxon>
        <taxon>Betaproteobacteria</taxon>
        <taxon>Burkholderiales</taxon>
        <taxon>Burkholderiaceae</taxon>
        <taxon>Cupriavidus</taxon>
    </lineage>
</organism>
<keyword id="KW-1185">Reference proteome</keyword>
<keyword id="KW-0687">Ribonucleoprotein</keyword>
<keyword id="KW-0689">Ribosomal protein</keyword>
<comment type="function">
    <text evidence="1">Involved in the binding of tRNA to the ribosomes.</text>
</comment>
<comment type="subunit">
    <text evidence="1">Part of the 30S ribosomal subunit.</text>
</comment>
<comment type="similarity">
    <text evidence="1">Belongs to the universal ribosomal protein uS10 family.</text>
</comment>
<proteinExistence type="inferred from homology"/>